<feature type="chain" id="PRO_1000089163" description="Endoribonuclease YbeY">
    <location>
        <begin position="1"/>
        <end position="141"/>
    </location>
</feature>
<feature type="binding site" evidence="1">
    <location>
        <position position="105"/>
    </location>
    <ligand>
        <name>Zn(2+)</name>
        <dbReference type="ChEBI" id="CHEBI:29105"/>
        <note>catalytic</note>
    </ligand>
</feature>
<feature type="binding site" evidence="1">
    <location>
        <position position="109"/>
    </location>
    <ligand>
        <name>Zn(2+)</name>
        <dbReference type="ChEBI" id="CHEBI:29105"/>
        <note>catalytic</note>
    </ligand>
</feature>
<feature type="binding site" evidence="1">
    <location>
        <position position="115"/>
    </location>
    <ligand>
        <name>Zn(2+)</name>
        <dbReference type="ChEBI" id="CHEBI:29105"/>
        <note>catalytic</note>
    </ligand>
</feature>
<reference key="1">
    <citation type="submission" date="2008-06" db="EMBL/GenBank/DDBJ databases">
        <title>Complete sequence of Chloroherpeton thalassium ATCC 35110.</title>
        <authorList>
            <consortium name="US DOE Joint Genome Institute"/>
            <person name="Lucas S."/>
            <person name="Copeland A."/>
            <person name="Lapidus A."/>
            <person name="Glavina del Rio T."/>
            <person name="Dalin E."/>
            <person name="Tice H."/>
            <person name="Bruce D."/>
            <person name="Goodwin L."/>
            <person name="Pitluck S."/>
            <person name="Schmutz J."/>
            <person name="Larimer F."/>
            <person name="Land M."/>
            <person name="Hauser L."/>
            <person name="Kyrpides N."/>
            <person name="Mikhailova N."/>
            <person name="Liu Z."/>
            <person name="Li T."/>
            <person name="Zhao F."/>
            <person name="Overmann J."/>
            <person name="Bryant D.A."/>
            <person name="Richardson P."/>
        </authorList>
    </citation>
    <scope>NUCLEOTIDE SEQUENCE [LARGE SCALE GENOMIC DNA]</scope>
    <source>
        <strain>ATCC 35110 / GB-78</strain>
    </source>
</reference>
<proteinExistence type="inferred from homology"/>
<comment type="function">
    <text evidence="1">Single strand-specific metallo-endoribonuclease involved in late-stage 70S ribosome quality control and in maturation of the 3' terminus of the 16S rRNA.</text>
</comment>
<comment type="cofactor">
    <cofactor evidence="1">
        <name>Zn(2+)</name>
        <dbReference type="ChEBI" id="CHEBI:29105"/>
    </cofactor>
    <text evidence="1">Binds 1 zinc ion.</text>
</comment>
<comment type="subcellular location">
    <subcellularLocation>
        <location evidence="1">Cytoplasm</location>
    </subcellularLocation>
</comment>
<comment type="similarity">
    <text evidence="1">Belongs to the endoribonuclease YbeY family.</text>
</comment>
<keyword id="KW-0963">Cytoplasm</keyword>
<keyword id="KW-0255">Endonuclease</keyword>
<keyword id="KW-0378">Hydrolase</keyword>
<keyword id="KW-0479">Metal-binding</keyword>
<keyword id="KW-0540">Nuclease</keyword>
<keyword id="KW-1185">Reference proteome</keyword>
<keyword id="KW-0690">Ribosome biogenesis</keyword>
<keyword id="KW-0698">rRNA processing</keyword>
<keyword id="KW-0862">Zinc</keyword>
<accession>B3QTP2</accession>
<evidence type="ECO:0000255" key="1">
    <source>
        <dbReference type="HAMAP-Rule" id="MF_00009"/>
    </source>
</evidence>
<name>YBEY_CHLT3</name>
<dbReference type="EC" id="3.1.-.-" evidence="1"/>
<dbReference type="EMBL" id="CP001100">
    <property type="protein sequence ID" value="ACF14240.1"/>
    <property type="molecule type" value="Genomic_DNA"/>
</dbReference>
<dbReference type="RefSeq" id="WP_012500324.1">
    <property type="nucleotide sequence ID" value="NC_011026.1"/>
</dbReference>
<dbReference type="SMR" id="B3QTP2"/>
<dbReference type="STRING" id="517418.Ctha_1783"/>
<dbReference type="KEGG" id="cts:Ctha_1783"/>
<dbReference type="eggNOG" id="COG0319">
    <property type="taxonomic scope" value="Bacteria"/>
</dbReference>
<dbReference type="HOGENOM" id="CLU_106710_3_3_10"/>
<dbReference type="OrthoDB" id="9811984at2"/>
<dbReference type="Proteomes" id="UP000001208">
    <property type="component" value="Chromosome"/>
</dbReference>
<dbReference type="GO" id="GO:0005737">
    <property type="term" value="C:cytoplasm"/>
    <property type="evidence" value="ECO:0007669"/>
    <property type="project" value="UniProtKB-SubCell"/>
</dbReference>
<dbReference type="GO" id="GO:0004222">
    <property type="term" value="F:metalloendopeptidase activity"/>
    <property type="evidence" value="ECO:0007669"/>
    <property type="project" value="InterPro"/>
</dbReference>
<dbReference type="GO" id="GO:0004521">
    <property type="term" value="F:RNA endonuclease activity"/>
    <property type="evidence" value="ECO:0007669"/>
    <property type="project" value="UniProtKB-UniRule"/>
</dbReference>
<dbReference type="GO" id="GO:0008270">
    <property type="term" value="F:zinc ion binding"/>
    <property type="evidence" value="ECO:0007669"/>
    <property type="project" value="UniProtKB-UniRule"/>
</dbReference>
<dbReference type="GO" id="GO:0006364">
    <property type="term" value="P:rRNA processing"/>
    <property type="evidence" value="ECO:0007669"/>
    <property type="project" value="UniProtKB-UniRule"/>
</dbReference>
<dbReference type="Gene3D" id="3.40.390.30">
    <property type="entry name" value="Metalloproteases ('zincins'), catalytic domain"/>
    <property type="match status" value="1"/>
</dbReference>
<dbReference type="HAMAP" id="MF_00009">
    <property type="entry name" value="Endoribonucl_YbeY"/>
    <property type="match status" value="1"/>
</dbReference>
<dbReference type="InterPro" id="IPR023091">
    <property type="entry name" value="MetalPrtase_cat_dom_sf_prd"/>
</dbReference>
<dbReference type="InterPro" id="IPR002036">
    <property type="entry name" value="YbeY"/>
</dbReference>
<dbReference type="InterPro" id="IPR020549">
    <property type="entry name" value="YbeY_CS"/>
</dbReference>
<dbReference type="NCBIfam" id="TIGR00043">
    <property type="entry name" value="rRNA maturation RNase YbeY"/>
    <property type="match status" value="1"/>
</dbReference>
<dbReference type="PANTHER" id="PTHR46986">
    <property type="entry name" value="ENDORIBONUCLEASE YBEY, CHLOROPLASTIC"/>
    <property type="match status" value="1"/>
</dbReference>
<dbReference type="PANTHER" id="PTHR46986:SF1">
    <property type="entry name" value="ENDORIBONUCLEASE YBEY, CHLOROPLASTIC"/>
    <property type="match status" value="1"/>
</dbReference>
<dbReference type="Pfam" id="PF02130">
    <property type="entry name" value="YbeY"/>
    <property type="match status" value="1"/>
</dbReference>
<dbReference type="SUPFAM" id="SSF55486">
    <property type="entry name" value="Metalloproteases ('zincins'), catalytic domain"/>
    <property type="match status" value="1"/>
</dbReference>
<dbReference type="PROSITE" id="PS01306">
    <property type="entry name" value="UPF0054"/>
    <property type="match status" value="1"/>
</dbReference>
<protein>
    <recommendedName>
        <fullName evidence="1">Endoribonuclease YbeY</fullName>
        <ecNumber evidence="1">3.1.-.-</ecNumber>
    </recommendedName>
</protein>
<gene>
    <name evidence="1" type="primary">ybeY</name>
    <name type="ordered locus">Ctha_1783</name>
</gene>
<organism>
    <name type="scientific">Chloroherpeton thalassium (strain ATCC 35110 / GB-78)</name>
    <dbReference type="NCBI Taxonomy" id="517418"/>
    <lineage>
        <taxon>Bacteria</taxon>
        <taxon>Pseudomonadati</taxon>
        <taxon>Chlorobiota</taxon>
        <taxon>Chlorobiia</taxon>
        <taxon>Chlorobiales</taxon>
        <taxon>Chloroherpetonaceae</taxon>
        <taxon>Chloroherpeton</taxon>
    </lineage>
</organism>
<sequence>MSIIISKTVKQELPEEKIRKAIELVLQGEKCEAEEISAVYCGDRLIRKINIEHLAHDYPTDTISFRLNSGNAIEGEFYISCDTVRRNAQEYESSFENELLRVTIHSVLHLIGFEDQSAAQKAEMTQKENRYLAALFHHDEK</sequence>